<name>PURA_ARTS2</name>
<evidence type="ECO:0000255" key="1">
    <source>
        <dbReference type="HAMAP-Rule" id="MF_00011"/>
    </source>
</evidence>
<proteinExistence type="inferred from homology"/>
<keyword id="KW-0963">Cytoplasm</keyword>
<keyword id="KW-0342">GTP-binding</keyword>
<keyword id="KW-0436">Ligase</keyword>
<keyword id="KW-0460">Magnesium</keyword>
<keyword id="KW-0479">Metal-binding</keyword>
<keyword id="KW-0547">Nucleotide-binding</keyword>
<keyword id="KW-0658">Purine biosynthesis</keyword>
<keyword id="KW-1185">Reference proteome</keyword>
<accession>A0JSA1</accession>
<organism>
    <name type="scientific">Arthrobacter sp. (strain FB24)</name>
    <dbReference type="NCBI Taxonomy" id="290399"/>
    <lineage>
        <taxon>Bacteria</taxon>
        <taxon>Bacillati</taxon>
        <taxon>Actinomycetota</taxon>
        <taxon>Actinomycetes</taxon>
        <taxon>Micrococcales</taxon>
        <taxon>Micrococcaceae</taxon>
        <taxon>Arthrobacter</taxon>
    </lineage>
</organism>
<reference key="1">
    <citation type="journal article" date="2013" name="Stand. Genomic Sci.">
        <title>Complete genome sequence of Arthrobacter sp. strain FB24.</title>
        <authorList>
            <person name="Nakatsu C.H."/>
            <person name="Barabote R."/>
            <person name="Thompson S."/>
            <person name="Bruce D."/>
            <person name="Detter C."/>
            <person name="Brettin T."/>
            <person name="Han C."/>
            <person name="Beasley F."/>
            <person name="Chen W."/>
            <person name="Konopka A."/>
            <person name="Xie G."/>
        </authorList>
    </citation>
    <scope>NUCLEOTIDE SEQUENCE [LARGE SCALE GENOMIC DNA]</scope>
    <source>
        <strain>FB24</strain>
    </source>
</reference>
<protein>
    <recommendedName>
        <fullName evidence="1">Adenylosuccinate synthetase</fullName>
        <shortName evidence="1">AMPSase</shortName>
        <shortName evidence="1">AdSS</shortName>
        <ecNumber evidence="1">6.3.4.4</ecNumber>
    </recommendedName>
    <alternativeName>
        <fullName evidence="1">IMP--aspartate ligase</fullName>
    </alternativeName>
</protein>
<feature type="chain" id="PRO_1000000777" description="Adenylosuccinate synthetase">
    <location>
        <begin position="1"/>
        <end position="429"/>
    </location>
</feature>
<feature type="active site" description="Proton acceptor" evidence="1">
    <location>
        <position position="13"/>
    </location>
</feature>
<feature type="active site" description="Proton donor" evidence="1">
    <location>
        <position position="41"/>
    </location>
</feature>
<feature type="binding site" evidence="1">
    <location>
        <begin position="12"/>
        <end position="18"/>
    </location>
    <ligand>
        <name>GTP</name>
        <dbReference type="ChEBI" id="CHEBI:37565"/>
    </ligand>
</feature>
<feature type="binding site" description="in other chain" evidence="1">
    <location>
        <begin position="13"/>
        <end position="16"/>
    </location>
    <ligand>
        <name>IMP</name>
        <dbReference type="ChEBI" id="CHEBI:58053"/>
        <note>ligand shared between dimeric partners</note>
    </ligand>
</feature>
<feature type="binding site" evidence="1">
    <location>
        <position position="13"/>
    </location>
    <ligand>
        <name>Mg(2+)</name>
        <dbReference type="ChEBI" id="CHEBI:18420"/>
    </ligand>
</feature>
<feature type="binding site" description="in other chain" evidence="1">
    <location>
        <begin position="38"/>
        <end position="41"/>
    </location>
    <ligand>
        <name>IMP</name>
        <dbReference type="ChEBI" id="CHEBI:58053"/>
        <note>ligand shared between dimeric partners</note>
    </ligand>
</feature>
<feature type="binding site" evidence="1">
    <location>
        <begin position="40"/>
        <end position="42"/>
    </location>
    <ligand>
        <name>GTP</name>
        <dbReference type="ChEBI" id="CHEBI:37565"/>
    </ligand>
</feature>
<feature type="binding site" evidence="1">
    <location>
        <position position="40"/>
    </location>
    <ligand>
        <name>Mg(2+)</name>
        <dbReference type="ChEBI" id="CHEBI:18420"/>
    </ligand>
</feature>
<feature type="binding site" description="in other chain" evidence="1">
    <location>
        <position position="128"/>
    </location>
    <ligand>
        <name>IMP</name>
        <dbReference type="ChEBI" id="CHEBI:58053"/>
        <note>ligand shared between dimeric partners</note>
    </ligand>
</feature>
<feature type="binding site" evidence="1">
    <location>
        <position position="142"/>
    </location>
    <ligand>
        <name>IMP</name>
        <dbReference type="ChEBI" id="CHEBI:58053"/>
        <note>ligand shared between dimeric partners</note>
    </ligand>
</feature>
<feature type="binding site" description="in other chain" evidence="1">
    <location>
        <position position="223"/>
    </location>
    <ligand>
        <name>IMP</name>
        <dbReference type="ChEBI" id="CHEBI:58053"/>
        <note>ligand shared between dimeric partners</note>
    </ligand>
</feature>
<feature type="binding site" description="in other chain" evidence="1">
    <location>
        <position position="238"/>
    </location>
    <ligand>
        <name>IMP</name>
        <dbReference type="ChEBI" id="CHEBI:58053"/>
        <note>ligand shared between dimeric partners</note>
    </ligand>
</feature>
<feature type="binding site" evidence="1">
    <location>
        <begin position="298"/>
        <end position="304"/>
    </location>
    <ligand>
        <name>substrate</name>
    </ligand>
</feature>
<feature type="binding site" description="in other chain" evidence="1">
    <location>
        <position position="302"/>
    </location>
    <ligand>
        <name>IMP</name>
        <dbReference type="ChEBI" id="CHEBI:58053"/>
        <note>ligand shared between dimeric partners</note>
    </ligand>
</feature>
<feature type="binding site" evidence="1">
    <location>
        <position position="304"/>
    </location>
    <ligand>
        <name>GTP</name>
        <dbReference type="ChEBI" id="CHEBI:37565"/>
    </ligand>
</feature>
<feature type="binding site" evidence="1">
    <location>
        <begin position="330"/>
        <end position="332"/>
    </location>
    <ligand>
        <name>GTP</name>
        <dbReference type="ChEBI" id="CHEBI:37565"/>
    </ligand>
</feature>
<feature type="binding site" evidence="1">
    <location>
        <begin position="412"/>
        <end position="414"/>
    </location>
    <ligand>
        <name>GTP</name>
        <dbReference type="ChEBI" id="CHEBI:37565"/>
    </ligand>
</feature>
<comment type="function">
    <text evidence="1">Plays an important role in the de novo pathway of purine nucleotide biosynthesis. Catalyzes the first committed step in the biosynthesis of AMP from IMP.</text>
</comment>
<comment type="catalytic activity">
    <reaction evidence="1">
        <text>IMP + L-aspartate + GTP = N(6)-(1,2-dicarboxyethyl)-AMP + GDP + phosphate + 2 H(+)</text>
        <dbReference type="Rhea" id="RHEA:15753"/>
        <dbReference type="ChEBI" id="CHEBI:15378"/>
        <dbReference type="ChEBI" id="CHEBI:29991"/>
        <dbReference type="ChEBI" id="CHEBI:37565"/>
        <dbReference type="ChEBI" id="CHEBI:43474"/>
        <dbReference type="ChEBI" id="CHEBI:57567"/>
        <dbReference type="ChEBI" id="CHEBI:58053"/>
        <dbReference type="ChEBI" id="CHEBI:58189"/>
        <dbReference type="EC" id="6.3.4.4"/>
    </reaction>
</comment>
<comment type="cofactor">
    <cofactor evidence="1">
        <name>Mg(2+)</name>
        <dbReference type="ChEBI" id="CHEBI:18420"/>
    </cofactor>
    <text evidence="1">Binds 1 Mg(2+) ion per subunit.</text>
</comment>
<comment type="pathway">
    <text evidence="1">Purine metabolism; AMP biosynthesis via de novo pathway; AMP from IMP: step 1/2.</text>
</comment>
<comment type="subunit">
    <text evidence="1">Homodimer.</text>
</comment>
<comment type="subcellular location">
    <subcellularLocation>
        <location evidence="1">Cytoplasm</location>
    </subcellularLocation>
</comment>
<comment type="similarity">
    <text evidence="1">Belongs to the adenylosuccinate synthetase family.</text>
</comment>
<gene>
    <name evidence="1" type="primary">purA</name>
    <name type="ordered locus">Arth_0522</name>
</gene>
<dbReference type="EC" id="6.3.4.4" evidence="1"/>
<dbReference type="EMBL" id="CP000454">
    <property type="protein sequence ID" value="ABK01921.1"/>
    <property type="molecule type" value="Genomic_DNA"/>
</dbReference>
<dbReference type="RefSeq" id="WP_011690390.1">
    <property type="nucleotide sequence ID" value="NC_008541.1"/>
</dbReference>
<dbReference type="SMR" id="A0JSA1"/>
<dbReference type="STRING" id="290399.Arth_0522"/>
<dbReference type="KEGG" id="art:Arth_0522"/>
<dbReference type="eggNOG" id="COG0104">
    <property type="taxonomic scope" value="Bacteria"/>
</dbReference>
<dbReference type="HOGENOM" id="CLU_029848_0_0_11"/>
<dbReference type="OrthoDB" id="9807553at2"/>
<dbReference type="UniPathway" id="UPA00075">
    <property type="reaction ID" value="UER00335"/>
</dbReference>
<dbReference type="Proteomes" id="UP000000754">
    <property type="component" value="Chromosome"/>
</dbReference>
<dbReference type="GO" id="GO:0005737">
    <property type="term" value="C:cytoplasm"/>
    <property type="evidence" value="ECO:0007669"/>
    <property type="project" value="UniProtKB-SubCell"/>
</dbReference>
<dbReference type="GO" id="GO:0004019">
    <property type="term" value="F:adenylosuccinate synthase activity"/>
    <property type="evidence" value="ECO:0007669"/>
    <property type="project" value="UniProtKB-UniRule"/>
</dbReference>
<dbReference type="GO" id="GO:0005525">
    <property type="term" value="F:GTP binding"/>
    <property type="evidence" value="ECO:0007669"/>
    <property type="project" value="UniProtKB-UniRule"/>
</dbReference>
<dbReference type="GO" id="GO:0000287">
    <property type="term" value="F:magnesium ion binding"/>
    <property type="evidence" value="ECO:0007669"/>
    <property type="project" value="UniProtKB-UniRule"/>
</dbReference>
<dbReference type="GO" id="GO:0044208">
    <property type="term" value="P:'de novo' AMP biosynthetic process"/>
    <property type="evidence" value="ECO:0007669"/>
    <property type="project" value="UniProtKB-UniRule"/>
</dbReference>
<dbReference type="GO" id="GO:0046040">
    <property type="term" value="P:IMP metabolic process"/>
    <property type="evidence" value="ECO:0007669"/>
    <property type="project" value="TreeGrafter"/>
</dbReference>
<dbReference type="CDD" id="cd03108">
    <property type="entry name" value="AdSS"/>
    <property type="match status" value="1"/>
</dbReference>
<dbReference type="FunFam" id="1.10.300.10:FF:000001">
    <property type="entry name" value="Adenylosuccinate synthetase"/>
    <property type="match status" value="1"/>
</dbReference>
<dbReference type="FunFam" id="3.90.170.10:FF:000001">
    <property type="entry name" value="Adenylosuccinate synthetase"/>
    <property type="match status" value="1"/>
</dbReference>
<dbReference type="Gene3D" id="3.40.440.10">
    <property type="entry name" value="Adenylosuccinate Synthetase, subunit A, domain 1"/>
    <property type="match status" value="1"/>
</dbReference>
<dbReference type="Gene3D" id="1.10.300.10">
    <property type="entry name" value="Adenylosuccinate Synthetase, subunit A, domain 2"/>
    <property type="match status" value="1"/>
</dbReference>
<dbReference type="Gene3D" id="3.90.170.10">
    <property type="entry name" value="Adenylosuccinate Synthetase, subunit A, domain 3"/>
    <property type="match status" value="1"/>
</dbReference>
<dbReference type="HAMAP" id="MF_00011">
    <property type="entry name" value="Adenylosucc_synth"/>
    <property type="match status" value="1"/>
</dbReference>
<dbReference type="InterPro" id="IPR018220">
    <property type="entry name" value="Adenylosuccin_syn_GTP-bd"/>
</dbReference>
<dbReference type="InterPro" id="IPR033128">
    <property type="entry name" value="Adenylosuccin_syn_Lys_AS"/>
</dbReference>
<dbReference type="InterPro" id="IPR042109">
    <property type="entry name" value="Adenylosuccinate_synth_dom1"/>
</dbReference>
<dbReference type="InterPro" id="IPR042110">
    <property type="entry name" value="Adenylosuccinate_synth_dom2"/>
</dbReference>
<dbReference type="InterPro" id="IPR042111">
    <property type="entry name" value="Adenylosuccinate_synth_dom3"/>
</dbReference>
<dbReference type="InterPro" id="IPR001114">
    <property type="entry name" value="Adenylosuccinate_synthetase"/>
</dbReference>
<dbReference type="InterPro" id="IPR027417">
    <property type="entry name" value="P-loop_NTPase"/>
</dbReference>
<dbReference type="NCBIfam" id="NF002223">
    <property type="entry name" value="PRK01117.1"/>
    <property type="match status" value="1"/>
</dbReference>
<dbReference type="NCBIfam" id="TIGR00184">
    <property type="entry name" value="purA"/>
    <property type="match status" value="1"/>
</dbReference>
<dbReference type="PANTHER" id="PTHR11846">
    <property type="entry name" value="ADENYLOSUCCINATE SYNTHETASE"/>
    <property type="match status" value="1"/>
</dbReference>
<dbReference type="PANTHER" id="PTHR11846:SF0">
    <property type="entry name" value="ADENYLOSUCCINATE SYNTHETASE"/>
    <property type="match status" value="1"/>
</dbReference>
<dbReference type="Pfam" id="PF00709">
    <property type="entry name" value="Adenylsucc_synt"/>
    <property type="match status" value="1"/>
</dbReference>
<dbReference type="SMART" id="SM00788">
    <property type="entry name" value="Adenylsucc_synt"/>
    <property type="match status" value="1"/>
</dbReference>
<dbReference type="SUPFAM" id="SSF52540">
    <property type="entry name" value="P-loop containing nucleoside triphosphate hydrolases"/>
    <property type="match status" value="1"/>
</dbReference>
<dbReference type="PROSITE" id="PS01266">
    <property type="entry name" value="ADENYLOSUCCIN_SYN_1"/>
    <property type="match status" value="1"/>
</dbReference>
<dbReference type="PROSITE" id="PS00513">
    <property type="entry name" value="ADENYLOSUCCIN_SYN_2"/>
    <property type="match status" value="1"/>
</dbReference>
<sequence length="429" mass="46607">MPAIVIVGAQWGDEGKGKATDLLGGRVDYVVKPNGGNNAGHTVVVGGEKYELKLLPAGILSPNAVPIIGNGCVVNLEALFQEIDGLEARGADTSKLRVSANAHLVAPYHQVLDKVTERFLGSRAIGTTGRGIGPAYMDKVARLGIRVQDVFDASILRQKVEGSLRQKNELLVKVYNRRDIEVDEIVDYFLSFAERLRPLVIDSTYVLNTALDEGKVVLMEGGQATFLDVDHGTYPFVTSSNPTAGGASVGSGIGPTRISRSIGIIKAYTTRVGAGPFPTELFDEMGMYLQKTGGEFGVNTGRPRRCGWYDAVLARHASRVNGFTDYFVTKLDVLTGIEQIPVCVAYDVDGVRHDEMPMTQTEFHHAKPIFEYFEGWTEDITGARTLEDLPENAKNYVLALEKLSGTRFSAIGVGPDRDQTIVVNDLIND</sequence>